<organism>
    <name type="scientific">Nymphaea alba</name>
    <name type="common">White water-lily</name>
    <name type="synonym">Castalia alba</name>
    <dbReference type="NCBI Taxonomy" id="34301"/>
    <lineage>
        <taxon>Eukaryota</taxon>
        <taxon>Viridiplantae</taxon>
        <taxon>Streptophyta</taxon>
        <taxon>Embryophyta</taxon>
        <taxon>Tracheophyta</taxon>
        <taxon>Spermatophyta</taxon>
        <taxon>Magnoliopsida</taxon>
        <taxon>Nymphaeales</taxon>
        <taxon>Nymphaeaceae</taxon>
        <taxon>Nymphaea</taxon>
    </lineage>
</organism>
<dbReference type="EMBL" id="AJ627251">
    <property type="protein sequence ID" value="CAF28628.1"/>
    <property type="molecule type" value="Genomic_DNA"/>
</dbReference>
<dbReference type="RefSeq" id="YP_053188.1">
    <property type="nucleotide sequence ID" value="NC_006050.1"/>
</dbReference>
<dbReference type="SMR" id="Q6EW18"/>
<dbReference type="GeneID" id="2896153"/>
<dbReference type="GO" id="GO:0009507">
    <property type="term" value="C:chloroplast"/>
    <property type="evidence" value="ECO:0007669"/>
    <property type="project" value="UniProtKB-SubCell"/>
</dbReference>
<dbReference type="GO" id="GO:1990904">
    <property type="term" value="C:ribonucleoprotein complex"/>
    <property type="evidence" value="ECO:0007669"/>
    <property type="project" value="UniProtKB-KW"/>
</dbReference>
<dbReference type="GO" id="GO:0005840">
    <property type="term" value="C:ribosome"/>
    <property type="evidence" value="ECO:0007669"/>
    <property type="project" value="UniProtKB-KW"/>
</dbReference>
<dbReference type="GO" id="GO:0003735">
    <property type="term" value="F:structural constituent of ribosome"/>
    <property type="evidence" value="ECO:0007669"/>
    <property type="project" value="InterPro"/>
</dbReference>
<dbReference type="GO" id="GO:0006412">
    <property type="term" value="P:translation"/>
    <property type="evidence" value="ECO:0007669"/>
    <property type="project" value="UniProtKB-UniRule"/>
</dbReference>
<dbReference type="HAMAP" id="MF_00251">
    <property type="entry name" value="Ribosomal_bL36"/>
    <property type="match status" value="1"/>
</dbReference>
<dbReference type="InterPro" id="IPR000473">
    <property type="entry name" value="Ribosomal_bL36"/>
</dbReference>
<dbReference type="InterPro" id="IPR035977">
    <property type="entry name" value="Ribosomal_bL36_sp"/>
</dbReference>
<dbReference type="NCBIfam" id="TIGR01022">
    <property type="entry name" value="rpmJ_bact"/>
    <property type="match status" value="1"/>
</dbReference>
<dbReference type="PANTHER" id="PTHR42888">
    <property type="entry name" value="50S RIBOSOMAL PROTEIN L36, CHLOROPLASTIC"/>
    <property type="match status" value="1"/>
</dbReference>
<dbReference type="PANTHER" id="PTHR42888:SF1">
    <property type="entry name" value="LARGE RIBOSOMAL SUBUNIT PROTEIN BL36C"/>
    <property type="match status" value="1"/>
</dbReference>
<dbReference type="Pfam" id="PF00444">
    <property type="entry name" value="Ribosomal_L36"/>
    <property type="match status" value="1"/>
</dbReference>
<dbReference type="SUPFAM" id="SSF57840">
    <property type="entry name" value="Ribosomal protein L36"/>
    <property type="match status" value="1"/>
</dbReference>
<dbReference type="PROSITE" id="PS00828">
    <property type="entry name" value="RIBOSOMAL_L36"/>
    <property type="match status" value="1"/>
</dbReference>
<proteinExistence type="inferred from homology"/>
<feature type="chain" id="PRO_0000126330" description="Large ribosomal subunit protein bL36c">
    <location>
        <begin position="1"/>
        <end position="37"/>
    </location>
</feature>
<comment type="subcellular location">
    <subcellularLocation>
        <location>Plastid</location>
        <location>Chloroplast</location>
    </subcellularLocation>
</comment>
<comment type="similarity">
    <text evidence="1">Belongs to the bacterial ribosomal protein bL36 family.</text>
</comment>
<geneLocation type="chloroplast"/>
<evidence type="ECO:0000255" key="1">
    <source>
        <dbReference type="HAMAP-Rule" id="MF_00251"/>
    </source>
</evidence>
<evidence type="ECO:0000305" key="2"/>
<gene>
    <name evidence="1" type="primary">rpl36</name>
</gene>
<keyword id="KW-0150">Chloroplast</keyword>
<keyword id="KW-0934">Plastid</keyword>
<keyword id="KW-0687">Ribonucleoprotein</keyword>
<keyword id="KW-0689">Ribosomal protein</keyword>
<accession>Q6EW18</accession>
<protein>
    <recommendedName>
        <fullName evidence="1">Large ribosomal subunit protein bL36c</fullName>
    </recommendedName>
    <alternativeName>
        <fullName evidence="2">50S ribosomal protein L36, chloroplastic</fullName>
    </alternativeName>
</protein>
<sequence length="37" mass="4432">MKIRASVRKICEKCRLIRRRGRIIVICSNPKHKQRQG</sequence>
<name>RK36_NYMAL</name>
<reference key="1">
    <citation type="journal article" date="2004" name="Mol. Biol. Evol.">
        <title>The chloroplast genome of Nymphaea alba: whole-genome analyses and the problem of identifying the most basal angiosperm.</title>
        <authorList>
            <person name="Goremykin V.V."/>
            <person name="Hirsch-Ernst K.I."/>
            <person name="Woelfl S."/>
            <person name="Hellwig F.H."/>
        </authorList>
    </citation>
    <scope>NUCLEOTIDE SEQUENCE [LARGE SCALE GENOMIC DNA]</scope>
</reference>